<dbReference type="EMBL" id="AAEY01000010">
    <property type="protein sequence ID" value="EAL22433.1"/>
    <property type="molecule type" value="Genomic_DNA"/>
</dbReference>
<dbReference type="RefSeq" id="XP_777080.1">
    <property type="nucleotide sequence ID" value="XM_771987.1"/>
</dbReference>
<dbReference type="SMR" id="P0CO13"/>
<dbReference type="EnsemblFungi" id="AAW41872">
    <property type="protein sequence ID" value="AAW41872"/>
    <property type="gene ID" value="CNB02560"/>
</dbReference>
<dbReference type="GeneID" id="4934405"/>
<dbReference type="KEGG" id="cnb:CNBB3120"/>
<dbReference type="VEuPathDB" id="FungiDB:CNBB3120"/>
<dbReference type="HOGENOM" id="CLU_007630_0_0_1"/>
<dbReference type="OrthoDB" id="5942at5206"/>
<dbReference type="GO" id="GO:0005737">
    <property type="term" value="C:cytoplasm"/>
    <property type="evidence" value="ECO:0007669"/>
    <property type="project" value="UniProtKB-SubCell"/>
</dbReference>
<dbReference type="GO" id="GO:0005634">
    <property type="term" value="C:nucleus"/>
    <property type="evidence" value="ECO:0007669"/>
    <property type="project" value="UniProtKB-SubCell"/>
</dbReference>
<dbReference type="GO" id="GO:0003729">
    <property type="term" value="F:mRNA binding"/>
    <property type="evidence" value="ECO:0007669"/>
    <property type="project" value="TreeGrafter"/>
</dbReference>
<dbReference type="GO" id="GO:0031124">
    <property type="term" value="P:mRNA 3'-end processing"/>
    <property type="evidence" value="ECO:0007669"/>
    <property type="project" value="InterPro"/>
</dbReference>
<dbReference type="FunFam" id="1.25.40.1040:FF:000011">
    <property type="entry name" value="Related to RNA14-component of pre-mRNA 3`-end processing factor CF I"/>
    <property type="match status" value="1"/>
</dbReference>
<dbReference type="Gene3D" id="1.25.40.1040">
    <property type="match status" value="2"/>
</dbReference>
<dbReference type="InterPro" id="IPR003107">
    <property type="entry name" value="HAT"/>
</dbReference>
<dbReference type="InterPro" id="IPR045243">
    <property type="entry name" value="Rna14-like"/>
</dbReference>
<dbReference type="InterPro" id="IPR008847">
    <property type="entry name" value="Suf"/>
</dbReference>
<dbReference type="InterPro" id="IPR011990">
    <property type="entry name" value="TPR-like_helical_dom_sf"/>
</dbReference>
<dbReference type="PANTHER" id="PTHR19980:SF0">
    <property type="entry name" value="CLEAVAGE STIMULATION FACTOR SUBUNIT 3"/>
    <property type="match status" value="1"/>
</dbReference>
<dbReference type="PANTHER" id="PTHR19980">
    <property type="entry name" value="RNA CLEAVAGE STIMULATION FACTOR"/>
    <property type="match status" value="1"/>
</dbReference>
<dbReference type="Pfam" id="PF05843">
    <property type="entry name" value="Suf"/>
    <property type="match status" value="1"/>
</dbReference>
<dbReference type="SMART" id="SM00386">
    <property type="entry name" value="HAT"/>
    <property type="match status" value="6"/>
</dbReference>
<dbReference type="SUPFAM" id="SSF48452">
    <property type="entry name" value="TPR-like"/>
    <property type="match status" value="2"/>
</dbReference>
<protein>
    <recommendedName>
        <fullName>mRNA 3'-end-processing protein RNA14</fullName>
    </recommendedName>
</protein>
<evidence type="ECO:0000250" key="1"/>
<evidence type="ECO:0000256" key="2">
    <source>
        <dbReference type="SAM" id="MobiDB-lite"/>
    </source>
</evidence>
<sequence length="1064" mass="116928">MSHEHPAEIVHQLQSIDSIQQDLADTAAAVVDAASQSLPPQHAAQDQKSHSTLLDNAEAMESILESAIPAAPGSSSTAAASDAIGDNNFTASGPPPISNTVVAPSAADDETGDVIVVESETPTTTNVVEAVVNPENDGDVPIESTEQSSGQPAEQPTEQPTEQPTEQPAEQPAVETPQAPQSTPAAPAASAVESIPTTLEETHLEQIVQAPAPTVHTEPLTPVVDIKMEEKPMIEHVAWIPPQGIHSDVFLPEGLTEYSPSVSQNGELIRSWRADPSNPTLLLSLFNWAVQKTEVEDARAWYRVLAVDNPTAAQPLLALINLELALSNFAEVEAIFASTLKGSAGITTAADVSIWAAYLHYIRRQNPLTEGSANAADVRSTITEAYEFALRECGFDRESGDIWDEYIKFVASGPATNQWDTQAKNDNLRKIYQRAVCIPLNNIEALWKSYDNFESSLNKLTAKKYLAEKSPAYMTARTALRELRALSDPIPKPILPPYPTFTEQDRQVVGAWKACLRWEEGNPLVIENHELLQSRIGYALRKCLGEMRHFPELWHYAASYYSKLGKQDEAAEILEAGVNACPKSFLLTFAYAELQEERKAFPTCHSLYTTLISKLNPEVDELRQNVAREIDIARGPPIPGSEKAAVAAAVGDSIDADGNDISDIQRLVEEREQRGALVAQRRGKDIEELMVGISVVWIMYMRFARRAEGIKAARGVFGKARKSPHLTWQVFEASALMEYHTNKDAAVAIRIFELGLKQFSEDVDYVIKYLQFLLSINDDNNARALFERSVVRIMGDKARPLWDAWARYEYTYGDLSAVHKLEARMSEVFPEDAPLKRFAQRWSYNGIDQIAIRDLGFNRARMGVAAPPAFAIAPVLPPVHASIPAPIAVPTPVQPPQESYKRPAPEDIPPRRPSSAEFSRSPKRHRAQSPPRRYPERDDRPPPGRYRDSLPPVKAPSSIPPPPLAGPAYATPSSGAYGGDKDRSGLEKPLAWFMAQLPNARSFDGPVFRPDDIMKLFGGLSLPGAGMPPAPPISRGPPPPPMQSRGYYEPERDRRYGGHGSGRY</sequence>
<feature type="chain" id="PRO_0000410111" description="mRNA 3'-end-processing protein RNA14">
    <location>
        <begin position="1"/>
        <end position="1064"/>
    </location>
</feature>
<feature type="repeat" description="HAT 1">
    <location>
        <begin position="327"/>
        <end position="364"/>
    </location>
</feature>
<feature type="repeat" description="HAT 2">
    <location>
        <begin position="377"/>
        <end position="412"/>
    </location>
</feature>
<feature type="repeat" description="HAT 3">
    <location>
        <begin position="423"/>
        <end position="456"/>
    </location>
</feature>
<feature type="repeat" description="HAT 4">
    <location>
        <begin position="673"/>
        <end position="706"/>
    </location>
</feature>
<feature type="repeat" description="HAT 5">
    <location>
        <begin position="777"/>
        <end position="811"/>
    </location>
</feature>
<feature type="region of interest" description="Disordered" evidence="2">
    <location>
        <begin position="34"/>
        <end position="106"/>
    </location>
</feature>
<feature type="region of interest" description="Disordered" evidence="2">
    <location>
        <begin position="119"/>
        <end position="192"/>
    </location>
</feature>
<feature type="region of interest" description="Disordered" evidence="2">
    <location>
        <begin position="888"/>
        <end position="985"/>
    </location>
</feature>
<feature type="region of interest" description="Disordered" evidence="2">
    <location>
        <begin position="1022"/>
        <end position="1064"/>
    </location>
</feature>
<feature type="compositionally biased region" description="Polar residues" evidence="2">
    <location>
        <begin position="44"/>
        <end position="54"/>
    </location>
</feature>
<feature type="compositionally biased region" description="Low complexity" evidence="2">
    <location>
        <begin position="66"/>
        <end position="86"/>
    </location>
</feature>
<feature type="compositionally biased region" description="Low complexity" evidence="2">
    <location>
        <begin position="151"/>
        <end position="191"/>
    </location>
</feature>
<feature type="compositionally biased region" description="Basic and acidic residues" evidence="2">
    <location>
        <begin position="899"/>
        <end position="910"/>
    </location>
</feature>
<feature type="compositionally biased region" description="Basic and acidic residues" evidence="2">
    <location>
        <begin position="933"/>
        <end position="948"/>
    </location>
</feature>
<feature type="compositionally biased region" description="Pro residues" evidence="2">
    <location>
        <begin position="1026"/>
        <end position="1042"/>
    </location>
</feature>
<comment type="function">
    <text evidence="1">Component of the cleavage factor IA (CFIA) complex, which is involved in the endonucleolytic cleavage during polyadenylation-dependent pre-mRNA 3'-end formation.</text>
</comment>
<comment type="subcellular location">
    <subcellularLocation>
        <location evidence="1">Nucleus</location>
    </subcellularLocation>
    <subcellularLocation>
        <location evidence="1">Cytoplasm</location>
    </subcellularLocation>
    <text evidence="1">Nucleus and/or cytoplasm.</text>
</comment>
<gene>
    <name type="primary">RNA14</name>
    <name type="ordered locus">CNBB3120</name>
</gene>
<name>RNA14_CRYNB</name>
<organism>
    <name type="scientific">Cryptococcus neoformans var. neoformans serotype D (strain B-3501A)</name>
    <name type="common">Filobasidiella neoformans</name>
    <dbReference type="NCBI Taxonomy" id="283643"/>
    <lineage>
        <taxon>Eukaryota</taxon>
        <taxon>Fungi</taxon>
        <taxon>Dikarya</taxon>
        <taxon>Basidiomycota</taxon>
        <taxon>Agaricomycotina</taxon>
        <taxon>Tremellomycetes</taxon>
        <taxon>Tremellales</taxon>
        <taxon>Cryptococcaceae</taxon>
        <taxon>Cryptococcus</taxon>
        <taxon>Cryptococcus neoformans species complex</taxon>
    </lineage>
</organism>
<accession>P0CO13</accession>
<accession>Q55XQ2</accession>
<accession>Q5KM87</accession>
<reference key="1">
    <citation type="journal article" date="2005" name="Science">
        <title>The genome of the basidiomycetous yeast and human pathogen Cryptococcus neoformans.</title>
        <authorList>
            <person name="Loftus B.J."/>
            <person name="Fung E."/>
            <person name="Roncaglia P."/>
            <person name="Rowley D."/>
            <person name="Amedeo P."/>
            <person name="Bruno D."/>
            <person name="Vamathevan J."/>
            <person name="Miranda M."/>
            <person name="Anderson I.J."/>
            <person name="Fraser J.A."/>
            <person name="Allen J.E."/>
            <person name="Bosdet I.E."/>
            <person name="Brent M.R."/>
            <person name="Chiu R."/>
            <person name="Doering T.L."/>
            <person name="Donlin M.J."/>
            <person name="D'Souza C.A."/>
            <person name="Fox D.S."/>
            <person name="Grinberg V."/>
            <person name="Fu J."/>
            <person name="Fukushima M."/>
            <person name="Haas B.J."/>
            <person name="Huang J.C."/>
            <person name="Janbon G."/>
            <person name="Jones S.J.M."/>
            <person name="Koo H.L."/>
            <person name="Krzywinski M.I."/>
            <person name="Kwon-Chung K.J."/>
            <person name="Lengeler K.B."/>
            <person name="Maiti R."/>
            <person name="Marra M.A."/>
            <person name="Marra R.E."/>
            <person name="Mathewson C.A."/>
            <person name="Mitchell T.G."/>
            <person name="Pertea M."/>
            <person name="Riggs F.R."/>
            <person name="Salzberg S.L."/>
            <person name="Schein J.E."/>
            <person name="Shvartsbeyn A."/>
            <person name="Shin H."/>
            <person name="Shumway M."/>
            <person name="Specht C.A."/>
            <person name="Suh B.B."/>
            <person name="Tenney A."/>
            <person name="Utterback T.R."/>
            <person name="Wickes B.L."/>
            <person name="Wortman J.R."/>
            <person name="Wye N.H."/>
            <person name="Kronstad J.W."/>
            <person name="Lodge J.K."/>
            <person name="Heitman J."/>
            <person name="Davis R.W."/>
            <person name="Fraser C.M."/>
            <person name="Hyman R.W."/>
        </authorList>
    </citation>
    <scope>NUCLEOTIDE SEQUENCE [LARGE SCALE GENOMIC DNA]</scope>
    <source>
        <strain>B-3501A</strain>
    </source>
</reference>
<keyword id="KW-0963">Cytoplasm</keyword>
<keyword id="KW-0507">mRNA processing</keyword>
<keyword id="KW-0539">Nucleus</keyword>
<keyword id="KW-0677">Repeat</keyword>
<proteinExistence type="inferred from homology"/>